<organism>
    <name type="scientific">Helicobacter hepaticus (strain ATCC 51449 / 3B1)</name>
    <dbReference type="NCBI Taxonomy" id="235279"/>
    <lineage>
        <taxon>Bacteria</taxon>
        <taxon>Pseudomonadati</taxon>
        <taxon>Campylobacterota</taxon>
        <taxon>Epsilonproteobacteria</taxon>
        <taxon>Campylobacterales</taxon>
        <taxon>Helicobacteraceae</taxon>
        <taxon>Helicobacter</taxon>
    </lineage>
</organism>
<keyword id="KW-0963">Cytoplasm</keyword>
<keyword id="KW-1185">Reference proteome</keyword>
<keyword id="KW-0694">RNA-binding</keyword>
<gene>
    <name evidence="1" type="primary">smpB</name>
    <name type="ordered locus">HH_0121</name>
</gene>
<evidence type="ECO:0000255" key="1">
    <source>
        <dbReference type="HAMAP-Rule" id="MF_00023"/>
    </source>
</evidence>
<name>SSRP_HELHP</name>
<comment type="function">
    <text evidence="1">Required for rescue of stalled ribosomes mediated by trans-translation. Binds to transfer-messenger RNA (tmRNA), required for stable association of tmRNA with ribosomes. tmRNA and SmpB together mimic tRNA shape, replacing the anticodon stem-loop with SmpB. tmRNA is encoded by the ssrA gene; the 2 termini fold to resemble tRNA(Ala) and it encodes a 'tag peptide', a short internal open reading frame. During trans-translation Ala-aminoacylated tmRNA acts like a tRNA, entering the A-site of stalled ribosomes, displacing the stalled mRNA. The ribosome then switches to translate the ORF on the tmRNA; the nascent peptide is terminated with the 'tag peptide' encoded by the tmRNA and targeted for degradation. The ribosome is freed to recommence translation, which seems to be the essential function of trans-translation.</text>
</comment>
<comment type="subcellular location">
    <subcellularLocation>
        <location evidence="1">Cytoplasm</location>
    </subcellularLocation>
    <text evidence="1">The tmRNA-SmpB complex associates with stalled 70S ribosomes.</text>
</comment>
<comment type="similarity">
    <text evidence="1">Belongs to the SmpB family.</text>
</comment>
<proteinExistence type="inferred from homology"/>
<reference key="1">
    <citation type="journal article" date="2003" name="Proc. Natl. Acad. Sci. U.S.A.">
        <title>The complete genome sequence of the carcinogenic bacterium Helicobacter hepaticus.</title>
        <authorList>
            <person name="Suerbaum S."/>
            <person name="Josenhans C."/>
            <person name="Sterzenbach T."/>
            <person name="Drescher B."/>
            <person name="Brandt P."/>
            <person name="Bell M."/>
            <person name="Droege M."/>
            <person name="Fartmann B."/>
            <person name="Fischer H.-P."/>
            <person name="Ge Z."/>
            <person name="Hoerster A."/>
            <person name="Holland R."/>
            <person name="Klein K."/>
            <person name="Koenig J."/>
            <person name="Macko L."/>
            <person name="Mendz G.L."/>
            <person name="Nyakatura G."/>
            <person name="Schauer D.B."/>
            <person name="Shen Z."/>
            <person name="Weber J."/>
            <person name="Frosch M."/>
            <person name="Fox J.G."/>
        </authorList>
    </citation>
    <scope>NUCLEOTIDE SEQUENCE [LARGE SCALE GENOMIC DNA]</scope>
    <source>
        <strain>ATCC 51449 / 3B1</strain>
    </source>
</reference>
<feature type="chain" id="PRO_0000102959" description="SsrA-binding protein">
    <location>
        <begin position="1"/>
        <end position="155"/>
    </location>
</feature>
<accession>Q7VJX1</accession>
<sequence length="155" mass="18102">MPIRVIAKNKKAYFDYEILQSLESGIVLQGSEVKSIRAGRVNLKDSFIKIIRGEAFLFNAHISFLQTTYTHFKPNERRERKLLLHKKEIDKLFGSVSKESLSIVPLNIYFNQKNKIKLCIALVRGKKLHDKRESIKKKMLEREARAHMKSYGKKL</sequence>
<protein>
    <recommendedName>
        <fullName evidence="1">SsrA-binding protein</fullName>
    </recommendedName>
    <alternativeName>
        <fullName evidence="1">Small protein B</fullName>
    </alternativeName>
</protein>
<dbReference type="EMBL" id="AE017125">
    <property type="protein sequence ID" value="AAP76718.1"/>
    <property type="molecule type" value="Genomic_DNA"/>
</dbReference>
<dbReference type="SMR" id="Q7VJX1"/>
<dbReference type="STRING" id="235279.HH_0121"/>
<dbReference type="KEGG" id="hhe:HH_0121"/>
<dbReference type="eggNOG" id="COG0691">
    <property type="taxonomic scope" value="Bacteria"/>
</dbReference>
<dbReference type="HOGENOM" id="CLU_108953_3_1_7"/>
<dbReference type="OrthoDB" id="9805462at2"/>
<dbReference type="Proteomes" id="UP000002495">
    <property type="component" value="Chromosome"/>
</dbReference>
<dbReference type="GO" id="GO:0005829">
    <property type="term" value="C:cytosol"/>
    <property type="evidence" value="ECO:0007669"/>
    <property type="project" value="TreeGrafter"/>
</dbReference>
<dbReference type="GO" id="GO:0003723">
    <property type="term" value="F:RNA binding"/>
    <property type="evidence" value="ECO:0007669"/>
    <property type="project" value="UniProtKB-UniRule"/>
</dbReference>
<dbReference type="GO" id="GO:0070929">
    <property type="term" value="P:trans-translation"/>
    <property type="evidence" value="ECO:0007669"/>
    <property type="project" value="UniProtKB-UniRule"/>
</dbReference>
<dbReference type="CDD" id="cd09294">
    <property type="entry name" value="SmpB"/>
    <property type="match status" value="1"/>
</dbReference>
<dbReference type="Gene3D" id="2.40.280.10">
    <property type="match status" value="1"/>
</dbReference>
<dbReference type="HAMAP" id="MF_00023">
    <property type="entry name" value="SmpB"/>
    <property type="match status" value="1"/>
</dbReference>
<dbReference type="InterPro" id="IPR023620">
    <property type="entry name" value="SmpB"/>
</dbReference>
<dbReference type="InterPro" id="IPR000037">
    <property type="entry name" value="SsrA-bd_prot"/>
</dbReference>
<dbReference type="InterPro" id="IPR020081">
    <property type="entry name" value="SsrA-bd_prot_CS"/>
</dbReference>
<dbReference type="NCBIfam" id="NF003843">
    <property type="entry name" value="PRK05422.1"/>
    <property type="match status" value="1"/>
</dbReference>
<dbReference type="NCBIfam" id="TIGR00086">
    <property type="entry name" value="smpB"/>
    <property type="match status" value="1"/>
</dbReference>
<dbReference type="PANTHER" id="PTHR30308:SF2">
    <property type="entry name" value="SSRA-BINDING PROTEIN"/>
    <property type="match status" value="1"/>
</dbReference>
<dbReference type="PANTHER" id="PTHR30308">
    <property type="entry name" value="TMRNA-BINDING COMPONENT OF TRANS-TRANSLATION TAGGING COMPLEX"/>
    <property type="match status" value="1"/>
</dbReference>
<dbReference type="Pfam" id="PF01668">
    <property type="entry name" value="SmpB"/>
    <property type="match status" value="1"/>
</dbReference>
<dbReference type="SUPFAM" id="SSF74982">
    <property type="entry name" value="Small protein B (SmpB)"/>
    <property type="match status" value="1"/>
</dbReference>
<dbReference type="PROSITE" id="PS01317">
    <property type="entry name" value="SSRP"/>
    <property type="match status" value="1"/>
</dbReference>